<sequence length="81" mass="8898">MSHAVKIYDTCIGCTQCVRACPLDVLEMVPWDGHKSGQIAASPRTEDCVGCKRCETACPTHFLSIRVYLGDETTRSMGLAY</sequence>
<keyword id="KW-0004">4Fe-4S</keyword>
<keyword id="KW-0249">Electron transport</keyword>
<keyword id="KW-0408">Iron</keyword>
<keyword id="KW-0411">Iron-sulfur</keyword>
<keyword id="KW-0472">Membrane</keyword>
<keyword id="KW-0479">Metal-binding</keyword>
<keyword id="KW-0560">Oxidoreductase</keyword>
<keyword id="KW-0602">Photosynthesis</keyword>
<keyword id="KW-0603">Photosystem I</keyword>
<keyword id="KW-1185">Reference proteome</keyword>
<keyword id="KW-0677">Repeat</keyword>
<keyword id="KW-0793">Thylakoid</keyword>
<keyword id="KW-0813">Transport</keyword>
<dbReference type="EC" id="1.97.1.12" evidence="2"/>
<dbReference type="EMBL" id="BX548175">
    <property type="protein sequence ID" value="CAE22128.1"/>
    <property type="molecule type" value="Genomic_DNA"/>
</dbReference>
<dbReference type="RefSeq" id="WP_011131319.1">
    <property type="nucleotide sequence ID" value="NC_005071.1"/>
</dbReference>
<dbReference type="SMR" id="Q7V4J7"/>
<dbReference type="KEGG" id="pmt:PMT_1954"/>
<dbReference type="eggNOG" id="COG1143">
    <property type="taxonomic scope" value="Bacteria"/>
</dbReference>
<dbReference type="HOGENOM" id="CLU_139698_8_0_3"/>
<dbReference type="OrthoDB" id="9804603at2"/>
<dbReference type="Proteomes" id="UP000001423">
    <property type="component" value="Chromosome"/>
</dbReference>
<dbReference type="GO" id="GO:0009522">
    <property type="term" value="C:photosystem I"/>
    <property type="evidence" value="ECO:0007669"/>
    <property type="project" value="UniProtKB-KW"/>
</dbReference>
<dbReference type="GO" id="GO:0031676">
    <property type="term" value="C:plasma membrane-derived thylakoid membrane"/>
    <property type="evidence" value="ECO:0007669"/>
    <property type="project" value="UniProtKB-SubCell"/>
</dbReference>
<dbReference type="GO" id="GO:0051539">
    <property type="term" value="F:4 iron, 4 sulfur cluster binding"/>
    <property type="evidence" value="ECO:0007669"/>
    <property type="project" value="UniProtKB-KW"/>
</dbReference>
<dbReference type="GO" id="GO:0009055">
    <property type="term" value="F:electron transfer activity"/>
    <property type="evidence" value="ECO:0007669"/>
    <property type="project" value="UniProtKB-UniRule"/>
</dbReference>
<dbReference type="GO" id="GO:0046872">
    <property type="term" value="F:metal ion binding"/>
    <property type="evidence" value="ECO:0007669"/>
    <property type="project" value="UniProtKB-KW"/>
</dbReference>
<dbReference type="GO" id="GO:0016491">
    <property type="term" value="F:oxidoreductase activity"/>
    <property type="evidence" value="ECO:0007669"/>
    <property type="project" value="UniProtKB-KW"/>
</dbReference>
<dbReference type="GO" id="GO:0009773">
    <property type="term" value="P:photosynthetic electron transport in photosystem I"/>
    <property type="evidence" value="ECO:0007669"/>
    <property type="project" value="InterPro"/>
</dbReference>
<dbReference type="FunFam" id="3.30.70.20:FF:000001">
    <property type="entry name" value="Photosystem I iron-sulfur center"/>
    <property type="match status" value="1"/>
</dbReference>
<dbReference type="Gene3D" id="3.30.70.20">
    <property type="match status" value="1"/>
</dbReference>
<dbReference type="HAMAP" id="MF_01303">
    <property type="entry name" value="PSI_PsaC"/>
    <property type="match status" value="1"/>
</dbReference>
<dbReference type="InterPro" id="IPR017896">
    <property type="entry name" value="4Fe4S_Fe-S-bd"/>
</dbReference>
<dbReference type="InterPro" id="IPR017900">
    <property type="entry name" value="4Fe4S_Fe_S_CS"/>
</dbReference>
<dbReference type="InterPro" id="IPR050157">
    <property type="entry name" value="PSI_iron-sulfur_center"/>
</dbReference>
<dbReference type="InterPro" id="IPR017491">
    <property type="entry name" value="PSI_PsaC"/>
</dbReference>
<dbReference type="NCBIfam" id="TIGR03048">
    <property type="entry name" value="PS_I_psaC"/>
    <property type="match status" value="1"/>
</dbReference>
<dbReference type="PANTHER" id="PTHR24960:SF79">
    <property type="entry name" value="PHOTOSYSTEM I IRON-SULFUR CENTER"/>
    <property type="match status" value="1"/>
</dbReference>
<dbReference type="PANTHER" id="PTHR24960">
    <property type="entry name" value="PHOTOSYSTEM I IRON-SULFUR CENTER-RELATED"/>
    <property type="match status" value="1"/>
</dbReference>
<dbReference type="Pfam" id="PF12838">
    <property type="entry name" value="Fer4_7"/>
    <property type="match status" value="1"/>
</dbReference>
<dbReference type="SUPFAM" id="SSF54862">
    <property type="entry name" value="4Fe-4S ferredoxins"/>
    <property type="match status" value="1"/>
</dbReference>
<dbReference type="PROSITE" id="PS00198">
    <property type="entry name" value="4FE4S_FER_1"/>
    <property type="match status" value="2"/>
</dbReference>
<dbReference type="PROSITE" id="PS51379">
    <property type="entry name" value="4FE4S_FER_2"/>
    <property type="match status" value="2"/>
</dbReference>
<feature type="initiator methionine" description="Removed" evidence="1">
    <location>
        <position position="1"/>
    </location>
</feature>
<feature type="chain" id="PRO_0000062016" description="Photosystem I iron-sulfur center">
    <location>
        <begin position="2"/>
        <end position="81"/>
    </location>
</feature>
<feature type="domain" description="4Fe-4S ferredoxin-type 1" evidence="2">
    <location>
        <begin position="2"/>
        <end position="31"/>
    </location>
</feature>
<feature type="domain" description="4Fe-4S ferredoxin-type 2" evidence="2">
    <location>
        <begin position="39"/>
        <end position="68"/>
    </location>
</feature>
<feature type="binding site" evidence="2">
    <location>
        <position position="11"/>
    </location>
    <ligand>
        <name>[4Fe-4S] cluster</name>
        <dbReference type="ChEBI" id="CHEBI:49883"/>
        <label>1</label>
    </ligand>
</feature>
<feature type="binding site" evidence="2">
    <location>
        <position position="14"/>
    </location>
    <ligand>
        <name>[4Fe-4S] cluster</name>
        <dbReference type="ChEBI" id="CHEBI:49883"/>
        <label>1</label>
    </ligand>
</feature>
<feature type="binding site" evidence="2">
    <location>
        <position position="17"/>
    </location>
    <ligand>
        <name>[4Fe-4S] cluster</name>
        <dbReference type="ChEBI" id="CHEBI:49883"/>
        <label>1</label>
    </ligand>
</feature>
<feature type="binding site" evidence="2">
    <location>
        <position position="21"/>
    </location>
    <ligand>
        <name>[4Fe-4S] cluster</name>
        <dbReference type="ChEBI" id="CHEBI:49883"/>
        <label>2</label>
    </ligand>
</feature>
<feature type="binding site" evidence="2">
    <location>
        <position position="48"/>
    </location>
    <ligand>
        <name>[4Fe-4S] cluster</name>
        <dbReference type="ChEBI" id="CHEBI:49883"/>
        <label>2</label>
    </ligand>
</feature>
<feature type="binding site" evidence="2">
    <location>
        <position position="51"/>
    </location>
    <ligand>
        <name>[4Fe-4S] cluster</name>
        <dbReference type="ChEBI" id="CHEBI:49883"/>
        <label>2</label>
    </ligand>
</feature>
<feature type="binding site" evidence="2">
    <location>
        <position position="54"/>
    </location>
    <ligand>
        <name>[4Fe-4S] cluster</name>
        <dbReference type="ChEBI" id="CHEBI:49883"/>
        <label>2</label>
    </ligand>
</feature>
<feature type="binding site" evidence="2">
    <location>
        <position position="58"/>
    </location>
    <ligand>
        <name>[4Fe-4S] cluster</name>
        <dbReference type="ChEBI" id="CHEBI:49883"/>
        <label>1</label>
    </ligand>
</feature>
<name>PSAC_PROMM</name>
<proteinExistence type="inferred from homology"/>
<gene>
    <name evidence="2" type="primary">psaC</name>
    <name type="ordered locus">PMT_1954</name>
</gene>
<organism>
    <name type="scientific">Prochlorococcus marinus (strain MIT 9313)</name>
    <dbReference type="NCBI Taxonomy" id="74547"/>
    <lineage>
        <taxon>Bacteria</taxon>
        <taxon>Bacillati</taxon>
        <taxon>Cyanobacteriota</taxon>
        <taxon>Cyanophyceae</taxon>
        <taxon>Synechococcales</taxon>
        <taxon>Prochlorococcaceae</taxon>
        <taxon>Prochlorococcus</taxon>
    </lineage>
</organism>
<evidence type="ECO:0000250" key="1"/>
<evidence type="ECO:0000255" key="2">
    <source>
        <dbReference type="HAMAP-Rule" id="MF_01303"/>
    </source>
</evidence>
<accession>Q7V4J7</accession>
<protein>
    <recommendedName>
        <fullName evidence="2">Photosystem I iron-sulfur center</fullName>
        <ecNumber evidence="2">1.97.1.12</ecNumber>
    </recommendedName>
    <alternativeName>
        <fullName evidence="2">9 kDa polypeptide</fullName>
    </alternativeName>
    <alternativeName>
        <fullName evidence="2">PSI-C</fullName>
    </alternativeName>
    <alternativeName>
        <fullName evidence="2">Photosystem I subunit VII</fullName>
    </alternativeName>
    <alternativeName>
        <fullName evidence="2">PsaC</fullName>
    </alternativeName>
</protein>
<reference key="1">
    <citation type="journal article" date="2003" name="Nature">
        <title>Genome divergence in two Prochlorococcus ecotypes reflects oceanic niche differentiation.</title>
        <authorList>
            <person name="Rocap G."/>
            <person name="Larimer F.W."/>
            <person name="Lamerdin J.E."/>
            <person name="Malfatti S."/>
            <person name="Chain P."/>
            <person name="Ahlgren N.A."/>
            <person name="Arellano A."/>
            <person name="Coleman M."/>
            <person name="Hauser L."/>
            <person name="Hess W.R."/>
            <person name="Johnson Z.I."/>
            <person name="Land M.L."/>
            <person name="Lindell D."/>
            <person name="Post A.F."/>
            <person name="Regala W."/>
            <person name="Shah M."/>
            <person name="Shaw S.L."/>
            <person name="Steglich C."/>
            <person name="Sullivan M.B."/>
            <person name="Ting C.S."/>
            <person name="Tolonen A."/>
            <person name="Webb E.A."/>
            <person name="Zinser E.R."/>
            <person name="Chisholm S.W."/>
        </authorList>
    </citation>
    <scope>NUCLEOTIDE SEQUENCE [LARGE SCALE GENOMIC DNA]</scope>
    <source>
        <strain>MIT 9313</strain>
    </source>
</reference>
<comment type="function">
    <text evidence="2">Apoprotein for the two 4Fe-4S centers FA and FB of photosystem I (PSI); essential for photochemical activity. FB is the terminal electron acceptor of PSI, donating electrons to ferredoxin. The C-terminus interacts with PsaA/B/D and helps assemble the protein into the PSI complex. Required for binding of PsaD and PsaE to PSI. PSI is a plastocyanin/cytochrome c6-ferredoxin oxidoreductase, converting photonic excitation into a charge separation, which transfers an electron from the donor P700 chlorophyll pair to the spectroscopically characterized acceptors A0, A1, FX, FA and FB in turn.</text>
</comment>
<comment type="catalytic activity">
    <reaction evidence="2">
        <text>reduced [plastocyanin] + hnu + oxidized [2Fe-2S]-[ferredoxin] = oxidized [plastocyanin] + reduced [2Fe-2S]-[ferredoxin]</text>
        <dbReference type="Rhea" id="RHEA:30407"/>
        <dbReference type="Rhea" id="RHEA-COMP:10000"/>
        <dbReference type="Rhea" id="RHEA-COMP:10001"/>
        <dbReference type="Rhea" id="RHEA-COMP:10039"/>
        <dbReference type="Rhea" id="RHEA-COMP:10040"/>
        <dbReference type="ChEBI" id="CHEBI:29036"/>
        <dbReference type="ChEBI" id="CHEBI:30212"/>
        <dbReference type="ChEBI" id="CHEBI:33737"/>
        <dbReference type="ChEBI" id="CHEBI:33738"/>
        <dbReference type="ChEBI" id="CHEBI:49552"/>
        <dbReference type="EC" id="1.97.1.12"/>
    </reaction>
</comment>
<comment type="cofactor">
    <cofactor evidence="2">
        <name>[4Fe-4S] cluster</name>
        <dbReference type="ChEBI" id="CHEBI:49883"/>
    </cofactor>
    <text evidence="2">Binds 2 [4Fe-4S] clusters. Cluster 2 is most probably the spectroscopically characterized electron acceptor FA and cluster 1 is most probably FB.</text>
</comment>
<comment type="subunit">
    <text evidence="2">The cyanobacterial PSI reaction center is composed of one copy each of PsaA,B,C,D,E,F,I,J,K,L,M and X, and forms trimeric complexes.</text>
</comment>
<comment type="subcellular location">
    <subcellularLocation>
        <location evidence="2">Cellular thylakoid membrane</location>
        <topology evidence="2">Peripheral membrane protein</topology>
        <orientation evidence="2">Cytoplasmic side</orientation>
    </subcellularLocation>
</comment>